<protein>
    <recommendedName>
        <fullName>Tudor domain-containing protein 10</fullName>
    </recommendedName>
</protein>
<feature type="chain" id="PRO_0000270754" description="Tudor domain-containing protein 10">
    <location>
        <begin position="1"/>
        <end position="366"/>
    </location>
</feature>
<feature type="domain" description="RRM" evidence="2">
    <location>
        <begin position="34"/>
        <end position="107"/>
    </location>
</feature>
<feature type="domain" description="Tudor">
    <location>
        <begin position="210"/>
        <end position="317"/>
    </location>
</feature>
<feature type="coiled-coil region" evidence="1">
    <location>
        <begin position="216"/>
        <end position="237"/>
    </location>
</feature>
<feature type="splice variant" id="VSP_022216" description="In isoform 2." evidence="6">
    <original>VTAPASNLAVVPPLLPLGCLQQAAA</original>
    <variation>LHILKFEESK</variation>
    <location>
        <begin position="342"/>
        <end position="366"/>
    </location>
</feature>
<feature type="sequence variant" id="VAR_029817" description="In dbSNP:rs12750774.">
    <original>R</original>
    <variation>Q</variation>
    <location>
        <position position="181"/>
    </location>
</feature>
<feature type="sequence variant" id="VAR_029818" description="In dbSNP:rs3811448." evidence="3 4 5">
    <original>V</original>
    <variation>I</variation>
    <location>
        <position position="215"/>
    </location>
</feature>
<feature type="sequence conflict" description="In Ref. 4; CAD28538." evidence="7" ref="4">
    <original>K</original>
    <variation>N</variation>
    <location>
        <position position="93"/>
    </location>
</feature>
<feature type="sequence conflict" description="In Ref. 4; CAD28538." evidence="7" ref="4">
    <original>S</original>
    <variation>Q</variation>
    <location>
        <position position="297"/>
    </location>
</feature>
<gene>
    <name type="primary">TDRD10</name>
    <name type="ORF">UNQ9380/PRO34205</name>
</gene>
<reference key="1">
    <citation type="journal article" date="2004" name="Nat. Genet.">
        <title>Complete sequencing and characterization of 21,243 full-length human cDNAs.</title>
        <authorList>
            <person name="Ota T."/>
            <person name="Suzuki Y."/>
            <person name="Nishikawa T."/>
            <person name="Otsuki T."/>
            <person name="Sugiyama T."/>
            <person name="Irie R."/>
            <person name="Wakamatsu A."/>
            <person name="Hayashi K."/>
            <person name="Sato H."/>
            <person name="Nagai K."/>
            <person name="Kimura K."/>
            <person name="Makita H."/>
            <person name="Sekine M."/>
            <person name="Obayashi M."/>
            <person name="Nishi T."/>
            <person name="Shibahara T."/>
            <person name="Tanaka T."/>
            <person name="Ishii S."/>
            <person name="Yamamoto J."/>
            <person name="Saito K."/>
            <person name="Kawai Y."/>
            <person name="Isono Y."/>
            <person name="Nakamura Y."/>
            <person name="Nagahari K."/>
            <person name="Murakami K."/>
            <person name="Yasuda T."/>
            <person name="Iwayanagi T."/>
            <person name="Wagatsuma M."/>
            <person name="Shiratori A."/>
            <person name="Sudo H."/>
            <person name="Hosoiri T."/>
            <person name="Kaku Y."/>
            <person name="Kodaira H."/>
            <person name="Kondo H."/>
            <person name="Sugawara M."/>
            <person name="Takahashi M."/>
            <person name="Kanda K."/>
            <person name="Yokoi T."/>
            <person name="Furuya T."/>
            <person name="Kikkawa E."/>
            <person name="Omura Y."/>
            <person name="Abe K."/>
            <person name="Kamihara K."/>
            <person name="Katsuta N."/>
            <person name="Sato K."/>
            <person name="Tanikawa M."/>
            <person name="Yamazaki M."/>
            <person name="Ninomiya K."/>
            <person name="Ishibashi T."/>
            <person name="Yamashita H."/>
            <person name="Murakawa K."/>
            <person name="Fujimori K."/>
            <person name="Tanai H."/>
            <person name="Kimata M."/>
            <person name="Watanabe M."/>
            <person name="Hiraoka S."/>
            <person name="Chiba Y."/>
            <person name="Ishida S."/>
            <person name="Ono Y."/>
            <person name="Takiguchi S."/>
            <person name="Watanabe S."/>
            <person name="Yosida M."/>
            <person name="Hotuta T."/>
            <person name="Kusano J."/>
            <person name="Kanehori K."/>
            <person name="Takahashi-Fujii A."/>
            <person name="Hara H."/>
            <person name="Tanase T.-O."/>
            <person name="Nomura Y."/>
            <person name="Togiya S."/>
            <person name="Komai F."/>
            <person name="Hara R."/>
            <person name="Takeuchi K."/>
            <person name="Arita M."/>
            <person name="Imose N."/>
            <person name="Musashino K."/>
            <person name="Yuuki H."/>
            <person name="Oshima A."/>
            <person name="Sasaki N."/>
            <person name="Aotsuka S."/>
            <person name="Yoshikawa Y."/>
            <person name="Matsunawa H."/>
            <person name="Ichihara T."/>
            <person name="Shiohata N."/>
            <person name="Sano S."/>
            <person name="Moriya S."/>
            <person name="Momiyama H."/>
            <person name="Satoh N."/>
            <person name="Takami S."/>
            <person name="Terashima Y."/>
            <person name="Suzuki O."/>
            <person name="Nakagawa S."/>
            <person name="Senoh A."/>
            <person name="Mizoguchi H."/>
            <person name="Goto Y."/>
            <person name="Shimizu F."/>
            <person name="Wakebe H."/>
            <person name="Hishigaki H."/>
            <person name="Watanabe T."/>
            <person name="Sugiyama A."/>
            <person name="Takemoto M."/>
            <person name="Kawakami B."/>
            <person name="Yamazaki M."/>
            <person name="Watanabe K."/>
            <person name="Kumagai A."/>
            <person name="Itakura S."/>
            <person name="Fukuzumi Y."/>
            <person name="Fujimori Y."/>
            <person name="Komiyama M."/>
            <person name="Tashiro H."/>
            <person name="Tanigami A."/>
            <person name="Fujiwara T."/>
            <person name="Ono T."/>
            <person name="Yamada K."/>
            <person name="Fujii Y."/>
            <person name="Ozaki K."/>
            <person name="Hirao M."/>
            <person name="Ohmori Y."/>
            <person name="Kawabata A."/>
            <person name="Hikiji T."/>
            <person name="Kobatake N."/>
            <person name="Inagaki H."/>
            <person name="Ikema Y."/>
            <person name="Okamoto S."/>
            <person name="Okitani R."/>
            <person name="Kawakami T."/>
            <person name="Noguchi S."/>
            <person name="Itoh T."/>
            <person name="Shigeta K."/>
            <person name="Senba T."/>
            <person name="Matsumura K."/>
            <person name="Nakajima Y."/>
            <person name="Mizuno T."/>
            <person name="Morinaga M."/>
            <person name="Sasaki M."/>
            <person name="Togashi T."/>
            <person name="Oyama M."/>
            <person name="Hata H."/>
            <person name="Watanabe M."/>
            <person name="Komatsu T."/>
            <person name="Mizushima-Sugano J."/>
            <person name="Satoh T."/>
            <person name="Shirai Y."/>
            <person name="Takahashi Y."/>
            <person name="Nakagawa K."/>
            <person name="Okumura K."/>
            <person name="Nagase T."/>
            <person name="Nomura N."/>
            <person name="Kikuchi H."/>
            <person name="Masuho Y."/>
            <person name="Yamashita R."/>
            <person name="Nakai K."/>
            <person name="Yada T."/>
            <person name="Nakamura Y."/>
            <person name="Ohara O."/>
            <person name="Isogai T."/>
            <person name="Sugano S."/>
        </authorList>
    </citation>
    <scope>NUCLEOTIDE SEQUENCE [LARGE SCALE MRNA] (ISOFORM 1)</scope>
    <scope>VARIANT ILE-215</scope>
    <source>
        <tissue>Testis</tissue>
    </source>
</reference>
<reference key="2">
    <citation type="journal article" date="2006" name="Nature">
        <title>The DNA sequence and biological annotation of human chromosome 1.</title>
        <authorList>
            <person name="Gregory S.G."/>
            <person name="Barlow K.F."/>
            <person name="McLay K.E."/>
            <person name="Kaul R."/>
            <person name="Swarbreck D."/>
            <person name="Dunham A."/>
            <person name="Scott C.E."/>
            <person name="Howe K.L."/>
            <person name="Woodfine K."/>
            <person name="Spencer C.C.A."/>
            <person name="Jones M.C."/>
            <person name="Gillson C."/>
            <person name="Searle S."/>
            <person name="Zhou Y."/>
            <person name="Kokocinski F."/>
            <person name="McDonald L."/>
            <person name="Evans R."/>
            <person name="Phillips K."/>
            <person name="Atkinson A."/>
            <person name="Cooper R."/>
            <person name="Jones C."/>
            <person name="Hall R.E."/>
            <person name="Andrews T.D."/>
            <person name="Lloyd C."/>
            <person name="Ainscough R."/>
            <person name="Almeida J.P."/>
            <person name="Ambrose K.D."/>
            <person name="Anderson F."/>
            <person name="Andrew R.W."/>
            <person name="Ashwell R.I.S."/>
            <person name="Aubin K."/>
            <person name="Babbage A.K."/>
            <person name="Bagguley C.L."/>
            <person name="Bailey J."/>
            <person name="Beasley H."/>
            <person name="Bethel G."/>
            <person name="Bird C.P."/>
            <person name="Bray-Allen S."/>
            <person name="Brown J.Y."/>
            <person name="Brown A.J."/>
            <person name="Buckley D."/>
            <person name="Burton J."/>
            <person name="Bye J."/>
            <person name="Carder C."/>
            <person name="Chapman J.C."/>
            <person name="Clark S.Y."/>
            <person name="Clarke G."/>
            <person name="Clee C."/>
            <person name="Cobley V."/>
            <person name="Collier R.E."/>
            <person name="Corby N."/>
            <person name="Coville G.J."/>
            <person name="Davies J."/>
            <person name="Deadman R."/>
            <person name="Dunn M."/>
            <person name="Earthrowl M."/>
            <person name="Ellington A.G."/>
            <person name="Errington H."/>
            <person name="Frankish A."/>
            <person name="Frankland J."/>
            <person name="French L."/>
            <person name="Garner P."/>
            <person name="Garnett J."/>
            <person name="Gay L."/>
            <person name="Ghori M.R.J."/>
            <person name="Gibson R."/>
            <person name="Gilby L.M."/>
            <person name="Gillett W."/>
            <person name="Glithero R.J."/>
            <person name="Grafham D.V."/>
            <person name="Griffiths C."/>
            <person name="Griffiths-Jones S."/>
            <person name="Grocock R."/>
            <person name="Hammond S."/>
            <person name="Harrison E.S.I."/>
            <person name="Hart E."/>
            <person name="Haugen E."/>
            <person name="Heath P.D."/>
            <person name="Holmes S."/>
            <person name="Holt K."/>
            <person name="Howden P.J."/>
            <person name="Hunt A.R."/>
            <person name="Hunt S.E."/>
            <person name="Hunter G."/>
            <person name="Isherwood J."/>
            <person name="James R."/>
            <person name="Johnson C."/>
            <person name="Johnson D."/>
            <person name="Joy A."/>
            <person name="Kay M."/>
            <person name="Kershaw J.K."/>
            <person name="Kibukawa M."/>
            <person name="Kimberley A.M."/>
            <person name="King A."/>
            <person name="Knights A.J."/>
            <person name="Lad H."/>
            <person name="Laird G."/>
            <person name="Lawlor S."/>
            <person name="Leongamornlert D.A."/>
            <person name="Lloyd D.M."/>
            <person name="Loveland J."/>
            <person name="Lovell J."/>
            <person name="Lush M.J."/>
            <person name="Lyne R."/>
            <person name="Martin S."/>
            <person name="Mashreghi-Mohammadi M."/>
            <person name="Matthews L."/>
            <person name="Matthews N.S.W."/>
            <person name="McLaren S."/>
            <person name="Milne S."/>
            <person name="Mistry S."/>
            <person name="Moore M.J.F."/>
            <person name="Nickerson T."/>
            <person name="O'Dell C.N."/>
            <person name="Oliver K."/>
            <person name="Palmeiri A."/>
            <person name="Palmer S.A."/>
            <person name="Parker A."/>
            <person name="Patel D."/>
            <person name="Pearce A.V."/>
            <person name="Peck A.I."/>
            <person name="Pelan S."/>
            <person name="Phelps K."/>
            <person name="Phillimore B.J."/>
            <person name="Plumb R."/>
            <person name="Rajan J."/>
            <person name="Raymond C."/>
            <person name="Rouse G."/>
            <person name="Saenphimmachak C."/>
            <person name="Sehra H.K."/>
            <person name="Sheridan E."/>
            <person name="Shownkeen R."/>
            <person name="Sims S."/>
            <person name="Skuce C.D."/>
            <person name="Smith M."/>
            <person name="Steward C."/>
            <person name="Subramanian S."/>
            <person name="Sycamore N."/>
            <person name="Tracey A."/>
            <person name="Tromans A."/>
            <person name="Van Helmond Z."/>
            <person name="Wall M."/>
            <person name="Wallis J.M."/>
            <person name="White S."/>
            <person name="Whitehead S.L."/>
            <person name="Wilkinson J.E."/>
            <person name="Willey D.L."/>
            <person name="Williams H."/>
            <person name="Wilming L."/>
            <person name="Wray P.W."/>
            <person name="Wu Z."/>
            <person name="Coulson A."/>
            <person name="Vaudin M."/>
            <person name="Sulston J.E."/>
            <person name="Durbin R.M."/>
            <person name="Hubbard T."/>
            <person name="Wooster R."/>
            <person name="Dunham I."/>
            <person name="Carter N.P."/>
            <person name="McVean G."/>
            <person name="Ross M.T."/>
            <person name="Harrow J."/>
            <person name="Olson M.V."/>
            <person name="Beck S."/>
            <person name="Rogers J."/>
            <person name="Bentley D.R."/>
        </authorList>
    </citation>
    <scope>NUCLEOTIDE SEQUENCE [LARGE SCALE GENOMIC DNA]</scope>
</reference>
<reference key="3">
    <citation type="journal article" date="2004" name="Genome Res.">
        <title>The status, quality, and expansion of the NIH full-length cDNA project: the Mammalian Gene Collection (MGC).</title>
        <authorList>
            <consortium name="The MGC Project Team"/>
        </authorList>
    </citation>
    <scope>NUCLEOTIDE SEQUENCE [LARGE SCALE MRNA] (ISOFORM 2)</scope>
    <scope>NUCLEOTIDE SEQUENCE [LARGE SCALE MRNA] OF 96-357 (ISOFORM 1)</scope>
    <scope>VARIANT ILE-215</scope>
    <source>
        <tissue>Testis</tissue>
    </source>
</reference>
<reference key="4">
    <citation type="journal article" date="2007" name="BMC Genomics">
        <title>The full-ORF clone resource of the German cDNA consortium.</title>
        <authorList>
            <person name="Bechtel S."/>
            <person name="Rosenfelder H."/>
            <person name="Duda A."/>
            <person name="Schmidt C.P."/>
            <person name="Ernst U."/>
            <person name="Wellenreuther R."/>
            <person name="Mehrle A."/>
            <person name="Schuster C."/>
            <person name="Bahr A."/>
            <person name="Bloecker H."/>
            <person name="Heubner D."/>
            <person name="Hoerlein A."/>
            <person name="Michel G."/>
            <person name="Wedler H."/>
            <person name="Koehrer K."/>
            <person name="Ottenwaelder B."/>
            <person name="Poustka A."/>
            <person name="Wiemann S."/>
            <person name="Schupp I."/>
        </authorList>
    </citation>
    <scope>NUCLEOTIDE SEQUENCE [LARGE SCALE MRNA] OF 86-366 (ISOFORM 1)</scope>
    <scope>VARIANT ILE-215</scope>
    <source>
        <tissue>Testis</tissue>
    </source>
</reference>
<reference key="5">
    <citation type="journal article" date="2003" name="Genome Res.">
        <title>The secreted protein discovery initiative (SPDI), a large-scale effort to identify novel human secreted and transmembrane proteins: a bioinformatics assessment.</title>
        <authorList>
            <person name="Clark H.F."/>
            <person name="Gurney A.L."/>
            <person name="Abaya E."/>
            <person name="Baker K."/>
            <person name="Baldwin D.T."/>
            <person name="Brush J."/>
            <person name="Chen J."/>
            <person name="Chow B."/>
            <person name="Chui C."/>
            <person name="Crowley C."/>
            <person name="Currell B."/>
            <person name="Deuel B."/>
            <person name="Dowd P."/>
            <person name="Eaton D."/>
            <person name="Foster J.S."/>
            <person name="Grimaldi C."/>
            <person name="Gu Q."/>
            <person name="Hass P.E."/>
            <person name="Heldens S."/>
            <person name="Huang A."/>
            <person name="Kim H.S."/>
            <person name="Klimowski L."/>
            <person name="Jin Y."/>
            <person name="Johnson S."/>
            <person name="Lee J."/>
            <person name="Lewis L."/>
            <person name="Liao D."/>
            <person name="Mark M.R."/>
            <person name="Robbie E."/>
            <person name="Sanchez C."/>
            <person name="Schoenfeld J."/>
            <person name="Seshagiri S."/>
            <person name="Simmons L."/>
            <person name="Singh J."/>
            <person name="Smith V."/>
            <person name="Stinson J."/>
            <person name="Vagts A."/>
            <person name="Vandlen R.L."/>
            <person name="Watanabe C."/>
            <person name="Wieand D."/>
            <person name="Woods K."/>
            <person name="Xie M.-H."/>
            <person name="Yansura D.G."/>
            <person name="Yi S."/>
            <person name="Yu G."/>
            <person name="Yuan J."/>
            <person name="Zhang M."/>
            <person name="Zhang Z."/>
            <person name="Goddard A.D."/>
            <person name="Wood W.I."/>
            <person name="Godowski P.J."/>
            <person name="Gray A.M."/>
        </authorList>
    </citation>
    <scope>NUCLEOTIDE SEQUENCE [LARGE SCALE MRNA] OF 132-366 (ISOFORM 1)</scope>
</reference>
<comment type="alternative products">
    <event type="alternative splicing"/>
    <isoform>
        <id>Q5VZ19-1</id>
        <name>1</name>
        <sequence type="displayed"/>
    </isoform>
    <isoform>
        <id>Q5VZ19-2</id>
        <name>2</name>
        <sequence type="described" ref="VSP_022216"/>
    </isoform>
</comment>
<comment type="sequence caution" evidence="7">
    <conflict type="erroneous initiation">
        <sequence resource="EMBL-CDS" id="AAH44864"/>
    </conflict>
</comment>
<comment type="sequence caution" evidence="7">
    <conflict type="erroneous initiation">
        <sequence resource="EMBL-CDS" id="AAI00896"/>
    </conflict>
</comment>
<comment type="sequence caution" evidence="7">
    <conflict type="erroneous initiation">
        <sequence resource="EMBL-CDS" id="AAI00897"/>
    </conflict>
</comment>
<comment type="sequence caution" evidence="7">
    <conflict type="erroneous initiation">
        <sequence resource="EMBL-CDS" id="AAI00898"/>
    </conflict>
</comment>
<comment type="sequence caution" evidence="7">
    <conflict type="erroneous initiation">
        <sequence resource="EMBL-CDS" id="AAI00899"/>
    </conflict>
</comment>
<comment type="sequence caution" evidence="7">
    <conflict type="erroneous initiation">
        <sequence resource="EMBL-CDS" id="AAQ88562"/>
    </conflict>
</comment>
<comment type="sequence caution" evidence="7">
    <conflict type="frameshift">
        <sequence resource="EMBL-CDS" id="CAD28538"/>
    </conflict>
</comment>
<name>TDR10_HUMAN</name>
<sequence length="366" mass="40941">MSWNISHPQLSDKLFGKNGVLEEQKSPGFKKRETEVYVGNLPLDISKEEILYLLKDFNPLDVHKIQNGCKCFAFVDLGSMQKVTLAIQELNGKLFHKRKLFVNTSKRPPKRTPDMIQQPRAPLVLEKASGEGFGKTAAIIQLAPKAPVDLCETEKLRAAFFAVPLEMRGSFLVLLLRECFRDLSWLALIHSVRGEAGLLVTSIVPKTPFFWAMHVTEALHQNMQALFSTLAQAEEQQPYLEGSTVMRGTRCLAEYHLGDYGHAWNRCWVLDRVDTWAVVMFIDFGQLATIPVQSLRSLDSDDFWTIPPLTQPFMLEKDILSSYEVVHRILKGKITGALNSAVTAPASNLAVVPPLLPLGCLQQAAA</sequence>
<proteinExistence type="evidence at protein level"/>
<accession>Q5VZ19</accession>
<accession>A4FU09</accession>
<accession>B0QZ53</accession>
<accession>B4DXV4</accession>
<accession>Q3ZCP1</accession>
<accession>Q3ZCS7</accession>
<accession>Q5SXY7</accession>
<accession>Q6UXV2</accession>
<accession>Q8TCN3</accession>
<organism>
    <name type="scientific">Homo sapiens</name>
    <name type="common">Human</name>
    <dbReference type="NCBI Taxonomy" id="9606"/>
    <lineage>
        <taxon>Eukaryota</taxon>
        <taxon>Metazoa</taxon>
        <taxon>Chordata</taxon>
        <taxon>Craniata</taxon>
        <taxon>Vertebrata</taxon>
        <taxon>Euteleostomi</taxon>
        <taxon>Mammalia</taxon>
        <taxon>Eutheria</taxon>
        <taxon>Euarchontoglires</taxon>
        <taxon>Primates</taxon>
        <taxon>Haplorrhini</taxon>
        <taxon>Catarrhini</taxon>
        <taxon>Hominidae</taxon>
        <taxon>Homo</taxon>
    </lineage>
</organism>
<dbReference type="EMBL" id="AK302144">
    <property type="protein sequence ID" value="BAG63516.1"/>
    <property type="molecule type" value="mRNA"/>
</dbReference>
<dbReference type="EMBL" id="AL162591">
    <property type="status" value="NOT_ANNOTATED_CDS"/>
    <property type="molecule type" value="Genomic_DNA"/>
</dbReference>
<dbReference type="EMBL" id="AL592078">
    <property type="status" value="NOT_ANNOTATED_CDS"/>
    <property type="molecule type" value="Genomic_DNA"/>
</dbReference>
<dbReference type="EMBL" id="BC044864">
    <property type="protein sequence ID" value="AAH44864.1"/>
    <property type="status" value="ALT_INIT"/>
    <property type="molecule type" value="mRNA"/>
</dbReference>
<dbReference type="EMBL" id="BC100895">
    <property type="protein sequence ID" value="AAI00896.1"/>
    <property type="status" value="ALT_INIT"/>
    <property type="molecule type" value="mRNA"/>
</dbReference>
<dbReference type="EMBL" id="BC100896">
    <property type="protein sequence ID" value="AAI00897.1"/>
    <property type="status" value="ALT_INIT"/>
    <property type="molecule type" value="mRNA"/>
</dbReference>
<dbReference type="EMBL" id="BC100897">
    <property type="protein sequence ID" value="AAI00898.1"/>
    <property type="status" value="ALT_INIT"/>
    <property type="molecule type" value="mRNA"/>
</dbReference>
<dbReference type="EMBL" id="BC100898">
    <property type="protein sequence ID" value="AAI00899.1"/>
    <property type="status" value="ALT_INIT"/>
    <property type="molecule type" value="mRNA"/>
</dbReference>
<dbReference type="EMBL" id="AL713777">
    <property type="protein sequence ID" value="CAD28538.1"/>
    <property type="status" value="ALT_FRAME"/>
    <property type="molecule type" value="mRNA"/>
</dbReference>
<dbReference type="EMBL" id="AY358195">
    <property type="protein sequence ID" value="AAQ88562.1"/>
    <property type="status" value="ALT_INIT"/>
    <property type="molecule type" value="mRNA"/>
</dbReference>
<dbReference type="CCDS" id="CCDS30878.2">
    <molecule id="Q5VZ19-2"/>
</dbReference>
<dbReference type="CCDS" id="CCDS41406.1">
    <molecule id="Q5VZ19-1"/>
</dbReference>
<dbReference type="RefSeq" id="NP_001091945.1">
    <molecule id="Q5VZ19-1"/>
    <property type="nucleotide sequence ID" value="NM_001098475.2"/>
</dbReference>
<dbReference type="RefSeq" id="NP_872305.3">
    <molecule id="Q5VZ19-2"/>
    <property type="nucleotide sequence ID" value="NM_182499.4"/>
</dbReference>
<dbReference type="RefSeq" id="XP_006711219.1">
    <property type="nucleotide sequence ID" value="XM_006711156.2"/>
</dbReference>
<dbReference type="RefSeq" id="XP_011507462.1">
    <property type="nucleotide sequence ID" value="XM_011509160.2"/>
</dbReference>
<dbReference type="RefSeq" id="XP_011507463.1">
    <property type="nucleotide sequence ID" value="XM_011509161.1"/>
</dbReference>
<dbReference type="SMR" id="Q5VZ19"/>
<dbReference type="BioGRID" id="126008">
    <property type="interactions" value="3"/>
</dbReference>
<dbReference type="FunCoup" id="Q5VZ19">
    <property type="interactions" value="8"/>
</dbReference>
<dbReference type="IntAct" id="Q5VZ19">
    <property type="interactions" value="1"/>
</dbReference>
<dbReference type="STRING" id="9606.ENSP00000357465"/>
<dbReference type="iPTMnet" id="Q5VZ19"/>
<dbReference type="PhosphoSitePlus" id="Q5VZ19"/>
<dbReference type="BioMuta" id="TDRD10"/>
<dbReference type="DMDM" id="239938838"/>
<dbReference type="jPOST" id="Q5VZ19"/>
<dbReference type="MassIVE" id="Q5VZ19"/>
<dbReference type="PaxDb" id="9606-ENSP00000357465"/>
<dbReference type="PeptideAtlas" id="Q5VZ19"/>
<dbReference type="ProteomicsDB" id="65664">
    <molecule id="Q5VZ19-1"/>
</dbReference>
<dbReference type="ProteomicsDB" id="65665">
    <molecule id="Q5VZ19-2"/>
</dbReference>
<dbReference type="Antibodypedia" id="34154">
    <property type="antibodies" value="8 antibodies from 7 providers"/>
</dbReference>
<dbReference type="DNASU" id="126668"/>
<dbReference type="Ensembl" id="ENST00000368480.3">
    <molecule id="Q5VZ19-1"/>
    <property type="protein sequence ID" value="ENSP00000357465.3"/>
    <property type="gene ID" value="ENSG00000163239.12"/>
</dbReference>
<dbReference type="Ensembl" id="ENST00000368482.8">
    <molecule id="Q5VZ19-2"/>
    <property type="protein sequence ID" value="ENSP00000357467.4"/>
    <property type="gene ID" value="ENSG00000163239.12"/>
</dbReference>
<dbReference type="GeneID" id="126668"/>
<dbReference type="KEGG" id="hsa:126668"/>
<dbReference type="MANE-Select" id="ENST00000368482.8">
    <molecule id="Q5VZ19-2"/>
    <property type="protein sequence ID" value="ENSP00000357467.4"/>
    <property type="RefSeq nucleotide sequence ID" value="NM_182499.4"/>
    <property type="RefSeq protein sequence ID" value="NP_872305.3"/>
</dbReference>
<dbReference type="UCSC" id="uc001ffd.3">
    <molecule id="Q5VZ19-1"/>
    <property type="organism name" value="human"/>
</dbReference>
<dbReference type="AGR" id="HGNC:25316"/>
<dbReference type="CTD" id="126668"/>
<dbReference type="DisGeNET" id="126668"/>
<dbReference type="GeneCards" id="TDRD10"/>
<dbReference type="HGNC" id="HGNC:25316">
    <property type="gene designation" value="TDRD10"/>
</dbReference>
<dbReference type="HPA" id="ENSG00000163239">
    <property type="expression patterns" value="Tissue enriched (testis)"/>
</dbReference>
<dbReference type="neXtProt" id="NX_Q5VZ19"/>
<dbReference type="OpenTargets" id="ENSG00000163239"/>
<dbReference type="PharmGKB" id="PA142670823"/>
<dbReference type="VEuPathDB" id="HostDB:ENSG00000163239"/>
<dbReference type="eggNOG" id="ENOG502QWDW">
    <property type="taxonomic scope" value="Eukaryota"/>
</dbReference>
<dbReference type="GeneTree" id="ENSGT00390000006620"/>
<dbReference type="HOGENOM" id="CLU_069836_0_0_1"/>
<dbReference type="InParanoid" id="Q5VZ19"/>
<dbReference type="OMA" id="NRCWVLE"/>
<dbReference type="OrthoDB" id="21643at2759"/>
<dbReference type="PAN-GO" id="Q5VZ19">
    <property type="GO annotations" value="3 GO annotations based on evolutionary models"/>
</dbReference>
<dbReference type="PhylomeDB" id="Q5VZ19"/>
<dbReference type="TreeFam" id="TF343710"/>
<dbReference type="PathwayCommons" id="Q5VZ19"/>
<dbReference type="BioGRID-ORCS" id="126668">
    <property type="hits" value="10 hits in 1143 CRISPR screens"/>
</dbReference>
<dbReference type="GenomeRNAi" id="126668"/>
<dbReference type="Pharos" id="Q5VZ19">
    <property type="development level" value="Tdark"/>
</dbReference>
<dbReference type="PRO" id="PR:Q5VZ19"/>
<dbReference type="Proteomes" id="UP000005640">
    <property type="component" value="Chromosome 1"/>
</dbReference>
<dbReference type="RNAct" id="Q5VZ19">
    <property type="molecule type" value="protein"/>
</dbReference>
<dbReference type="Bgee" id="ENSG00000163239">
    <property type="expression patterns" value="Expressed in left testis and 118 other cell types or tissues"/>
</dbReference>
<dbReference type="GO" id="GO:0016020">
    <property type="term" value="C:membrane"/>
    <property type="evidence" value="ECO:0000318"/>
    <property type="project" value="GO_Central"/>
</dbReference>
<dbReference type="GO" id="GO:0005739">
    <property type="term" value="C:mitochondrion"/>
    <property type="evidence" value="ECO:0000318"/>
    <property type="project" value="GO_Central"/>
</dbReference>
<dbReference type="GO" id="GO:0034237">
    <property type="term" value="F:protein kinase A regulatory subunit binding"/>
    <property type="evidence" value="ECO:0000318"/>
    <property type="project" value="GO_Central"/>
</dbReference>
<dbReference type="GO" id="GO:0003723">
    <property type="term" value="F:RNA binding"/>
    <property type="evidence" value="ECO:0007669"/>
    <property type="project" value="UniProtKB-KW"/>
</dbReference>
<dbReference type="CDD" id="cd21617">
    <property type="entry name" value="RRM_TDRD10"/>
    <property type="match status" value="1"/>
</dbReference>
<dbReference type="CDD" id="cd20432">
    <property type="entry name" value="Tudor_TDRD10"/>
    <property type="match status" value="1"/>
</dbReference>
<dbReference type="Gene3D" id="2.30.30.140">
    <property type="match status" value="1"/>
</dbReference>
<dbReference type="Gene3D" id="2.40.50.90">
    <property type="match status" value="1"/>
</dbReference>
<dbReference type="Gene3D" id="3.30.70.330">
    <property type="match status" value="1"/>
</dbReference>
<dbReference type="InterPro" id="IPR012677">
    <property type="entry name" value="Nucleotide-bd_a/b_plait_sf"/>
</dbReference>
<dbReference type="InterPro" id="IPR035979">
    <property type="entry name" value="RBD_domain_sf"/>
</dbReference>
<dbReference type="InterPro" id="IPR000504">
    <property type="entry name" value="RRM_dom"/>
</dbReference>
<dbReference type="InterPro" id="IPR047385">
    <property type="entry name" value="RRM_TDRD10"/>
</dbReference>
<dbReference type="InterPro" id="IPR035437">
    <property type="entry name" value="SNase_OB-fold_sf"/>
</dbReference>
<dbReference type="InterPro" id="IPR002999">
    <property type="entry name" value="Tudor"/>
</dbReference>
<dbReference type="Pfam" id="PF00076">
    <property type="entry name" value="RRM_1"/>
    <property type="match status" value="1"/>
</dbReference>
<dbReference type="Pfam" id="PF00567">
    <property type="entry name" value="TUDOR"/>
    <property type="match status" value="1"/>
</dbReference>
<dbReference type="SMART" id="SM00360">
    <property type="entry name" value="RRM"/>
    <property type="match status" value="1"/>
</dbReference>
<dbReference type="SUPFAM" id="SSF54928">
    <property type="entry name" value="RNA-binding domain, RBD"/>
    <property type="match status" value="1"/>
</dbReference>
<dbReference type="SUPFAM" id="SSF63748">
    <property type="entry name" value="Tudor/PWWP/MBT"/>
    <property type="match status" value="1"/>
</dbReference>
<dbReference type="PROSITE" id="PS50102">
    <property type="entry name" value="RRM"/>
    <property type="match status" value="1"/>
</dbReference>
<keyword id="KW-0025">Alternative splicing</keyword>
<keyword id="KW-0175">Coiled coil</keyword>
<keyword id="KW-1267">Proteomics identification</keyword>
<keyword id="KW-1185">Reference proteome</keyword>
<keyword id="KW-0694">RNA-binding</keyword>
<evidence type="ECO:0000255" key="1"/>
<evidence type="ECO:0000255" key="2">
    <source>
        <dbReference type="PROSITE-ProRule" id="PRU00176"/>
    </source>
</evidence>
<evidence type="ECO:0000269" key="3">
    <source>
    </source>
</evidence>
<evidence type="ECO:0000269" key="4">
    <source>
    </source>
</evidence>
<evidence type="ECO:0000269" key="5">
    <source>
    </source>
</evidence>
<evidence type="ECO:0000303" key="6">
    <source>
    </source>
</evidence>
<evidence type="ECO:0000305" key="7"/>